<evidence type="ECO:0000255" key="1">
    <source>
        <dbReference type="HAMAP-Rule" id="MF_01371"/>
    </source>
</evidence>
<evidence type="ECO:0000305" key="2"/>
<name>RL30_MOOTA</name>
<accession>Q2RFR5</accession>
<keyword id="KW-0687">Ribonucleoprotein</keyword>
<keyword id="KW-0689">Ribosomal protein</keyword>
<proteinExistence type="inferred from homology"/>
<organism>
    <name type="scientific">Moorella thermoacetica (strain ATCC 39073 / JCM 9320)</name>
    <dbReference type="NCBI Taxonomy" id="264732"/>
    <lineage>
        <taxon>Bacteria</taxon>
        <taxon>Bacillati</taxon>
        <taxon>Bacillota</taxon>
        <taxon>Clostridia</taxon>
        <taxon>Moorellales</taxon>
        <taxon>Moorellaceae</taxon>
        <taxon>Moorella</taxon>
    </lineage>
</organism>
<sequence length="60" mass="6774">MANLRITLVKSLIGRPETERKTARAMGLKKLHRQVVCPDTPVTRGQVQKLAHLVRVESIE</sequence>
<reference key="1">
    <citation type="journal article" date="2008" name="Environ. Microbiol.">
        <title>The complete genome sequence of Moorella thermoacetica (f. Clostridium thermoaceticum).</title>
        <authorList>
            <person name="Pierce E."/>
            <person name="Xie G."/>
            <person name="Barabote R.D."/>
            <person name="Saunders E."/>
            <person name="Han C.S."/>
            <person name="Detter J.C."/>
            <person name="Richardson P."/>
            <person name="Brettin T.S."/>
            <person name="Das A."/>
            <person name="Ljungdahl L.G."/>
            <person name="Ragsdale S.W."/>
        </authorList>
    </citation>
    <scope>NUCLEOTIDE SEQUENCE [LARGE SCALE GENOMIC DNA]</scope>
    <source>
        <strain>ATCC 39073 / JCM 9320</strain>
    </source>
</reference>
<protein>
    <recommendedName>
        <fullName evidence="1">Large ribosomal subunit protein uL30</fullName>
    </recommendedName>
    <alternativeName>
        <fullName evidence="2">50S ribosomal protein L30</fullName>
    </alternativeName>
</protein>
<dbReference type="EMBL" id="CP000232">
    <property type="protein sequence ID" value="ABC20724.1"/>
    <property type="molecule type" value="Genomic_DNA"/>
</dbReference>
<dbReference type="RefSeq" id="YP_431267.1">
    <property type="nucleotide sequence ID" value="NC_007644.1"/>
</dbReference>
<dbReference type="SMR" id="Q2RFR5"/>
<dbReference type="STRING" id="264732.Moth_2442"/>
<dbReference type="EnsemblBacteria" id="ABC20724">
    <property type="protein sequence ID" value="ABC20724"/>
    <property type="gene ID" value="Moth_2442"/>
</dbReference>
<dbReference type="KEGG" id="mta:Moth_2442"/>
<dbReference type="PATRIC" id="fig|264732.11.peg.2660"/>
<dbReference type="eggNOG" id="COG1841">
    <property type="taxonomic scope" value="Bacteria"/>
</dbReference>
<dbReference type="HOGENOM" id="CLU_131047_2_1_9"/>
<dbReference type="OrthoDB" id="9812790at2"/>
<dbReference type="GO" id="GO:0022625">
    <property type="term" value="C:cytosolic large ribosomal subunit"/>
    <property type="evidence" value="ECO:0007669"/>
    <property type="project" value="TreeGrafter"/>
</dbReference>
<dbReference type="GO" id="GO:0003735">
    <property type="term" value="F:structural constituent of ribosome"/>
    <property type="evidence" value="ECO:0007669"/>
    <property type="project" value="InterPro"/>
</dbReference>
<dbReference type="GO" id="GO:0006412">
    <property type="term" value="P:translation"/>
    <property type="evidence" value="ECO:0007669"/>
    <property type="project" value="UniProtKB-UniRule"/>
</dbReference>
<dbReference type="CDD" id="cd01658">
    <property type="entry name" value="Ribosomal_L30"/>
    <property type="match status" value="1"/>
</dbReference>
<dbReference type="Gene3D" id="3.30.1390.20">
    <property type="entry name" value="Ribosomal protein L30, ferredoxin-like fold domain"/>
    <property type="match status" value="1"/>
</dbReference>
<dbReference type="HAMAP" id="MF_01371_B">
    <property type="entry name" value="Ribosomal_uL30_B"/>
    <property type="match status" value="1"/>
</dbReference>
<dbReference type="InterPro" id="IPR036919">
    <property type="entry name" value="Ribo_uL30_ferredoxin-like_sf"/>
</dbReference>
<dbReference type="InterPro" id="IPR005996">
    <property type="entry name" value="Ribosomal_uL30_bac-type"/>
</dbReference>
<dbReference type="InterPro" id="IPR016082">
    <property type="entry name" value="Ribosomal_uL30_ferredoxin-like"/>
</dbReference>
<dbReference type="NCBIfam" id="TIGR01308">
    <property type="entry name" value="rpmD_bact"/>
    <property type="match status" value="1"/>
</dbReference>
<dbReference type="PANTHER" id="PTHR15892:SF2">
    <property type="entry name" value="LARGE RIBOSOMAL SUBUNIT PROTEIN UL30M"/>
    <property type="match status" value="1"/>
</dbReference>
<dbReference type="PANTHER" id="PTHR15892">
    <property type="entry name" value="MITOCHONDRIAL RIBOSOMAL PROTEIN L30"/>
    <property type="match status" value="1"/>
</dbReference>
<dbReference type="Pfam" id="PF00327">
    <property type="entry name" value="Ribosomal_L30"/>
    <property type="match status" value="1"/>
</dbReference>
<dbReference type="PIRSF" id="PIRSF002211">
    <property type="entry name" value="Ribosomal_L30_bac-type"/>
    <property type="match status" value="1"/>
</dbReference>
<dbReference type="SUPFAM" id="SSF55129">
    <property type="entry name" value="Ribosomal protein L30p/L7e"/>
    <property type="match status" value="1"/>
</dbReference>
<gene>
    <name evidence="1" type="primary">rpmD</name>
    <name type="ordered locus">Moth_2442</name>
</gene>
<comment type="subunit">
    <text evidence="1">Part of the 50S ribosomal subunit.</text>
</comment>
<comment type="similarity">
    <text evidence="1">Belongs to the universal ribosomal protein uL30 family.</text>
</comment>
<feature type="chain" id="PRO_1000056072" description="Large ribosomal subunit protein uL30">
    <location>
        <begin position="1"/>
        <end position="60"/>
    </location>
</feature>